<keyword id="KW-0227">DNA damage</keyword>
<keyword id="KW-0234">DNA repair</keyword>
<keyword id="KW-0235">DNA replication</keyword>
<keyword id="KW-0255">Endonuclease</keyword>
<keyword id="KW-0269">Exonuclease</keyword>
<keyword id="KW-0378">Hydrolase</keyword>
<keyword id="KW-0460">Magnesium</keyword>
<keyword id="KW-0479">Metal-binding</keyword>
<keyword id="KW-0496">Mitochondrion</keyword>
<keyword id="KW-0540">Nuclease</keyword>
<keyword id="KW-0539">Nucleus</keyword>
<keyword id="KW-0597">Phosphoprotein</keyword>
<keyword id="KW-1185">Reference proteome</keyword>
<accession>B4GIM3</accession>
<feature type="chain" id="PRO_0000403502" description="Flap endonuclease 1">
    <location>
        <begin position="1"/>
        <end position="386"/>
    </location>
</feature>
<feature type="region of interest" description="N-domain">
    <location>
        <begin position="1"/>
        <end position="104"/>
    </location>
</feature>
<feature type="region of interest" description="I-domain">
    <location>
        <begin position="122"/>
        <end position="253"/>
    </location>
</feature>
<feature type="region of interest" description="Interaction with PCNA" evidence="1">
    <location>
        <begin position="336"/>
        <end position="344"/>
    </location>
</feature>
<feature type="region of interest" description="Disordered" evidence="2">
    <location>
        <begin position="351"/>
        <end position="386"/>
    </location>
</feature>
<feature type="binding site" evidence="1">
    <location>
        <position position="34"/>
    </location>
    <ligand>
        <name>Mg(2+)</name>
        <dbReference type="ChEBI" id="CHEBI:18420"/>
        <label>1</label>
    </ligand>
</feature>
<feature type="binding site" evidence="1">
    <location>
        <position position="47"/>
    </location>
    <ligand>
        <name>DNA</name>
        <dbReference type="ChEBI" id="CHEBI:16991"/>
    </ligand>
</feature>
<feature type="binding site" evidence="1">
    <location>
        <position position="70"/>
    </location>
    <ligand>
        <name>DNA</name>
        <dbReference type="ChEBI" id="CHEBI:16991"/>
    </ligand>
</feature>
<feature type="binding site" evidence="1">
    <location>
        <position position="86"/>
    </location>
    <ligand>
        <name>Mg(2+)</name>
        <dbReference type="ChEBI" id="CHEBI:18420"/>
        <label>1</label>
    </ligand>
</feature>
<feature type="binding site" evidence="1">
    <location>
        <position position="158"/>
    </location>
    <ligand>
        <name>DNA</name>
        <dbReference type="ChEBI" id="CHEBI:16991"/>
    </ligand>
</feature>
<feature type="binding site" evidence="1">
    <location>
        <position position="158"/>
    </location>
    <ligand>
        <name>Mg(2+)</name>
        <dbReference type="ChEBI" id="CHEBI:18420"/>
        <label>1</label>
    </ligand>
</feature>
<feature type="binding site" evidence="1">
    <location>
        <position position="160"/>
    </location>
    <ligand>
        <name>Mg(2+)</name>
        <dbReference type="ChEBI" id="CHEBI:18420"/>
        <label>1</label>
    </ligand>
</feature>
<feature type="binding site" evidence="1">
    <location>
        <position position="179"/>
    </location>
    <ligand>
        <name>Mg(2+)</name>
        <dbReference type="ChEBI" id="CHEBI:18420"/>
        <label>2</label>
    </ligand>
</feature>
<feature type="binding site" evidence="1">
    <location>
        <position position="181"/>
    </location>
    <ligand>
        <name>Mg(2+)</name>
        <dbReference type="ChEBI" id="CHEBI:18420"/>
        <label>2</label>
    </ligand>
</feature>
<feature type="binding site" evidence="1">
    <location>
        <position position="231"/>
    </location>
    <ligand>
        <name>DNA</name>
        <dbReference type="ChEBI" id="CHEBI:16991"/>
    </ligand>
</feature>
<feature type="binding site" evidence="1">
    <location>
        <position position="233"/>
    </location>
    <ligand>
        <name>DNA</name>
        <dbReference type="ChEBI" id="CHEBI:16991"/>
    </ligand>
</feature>
<feature type="binding site" evidence="1">
    <location>
        <position position="233"/>
    </location>
    <ligand>
        <name>Mg(2+)</name>
        <dbReference type="ChEBI" id="CHEBI:18420"/>
        <label>2</label>
    </ligand>
</feature>
<proteinExistence type="inferred from homology"/>
<name>FEN1_DROPE</name>
<evidence type="ECO:0000255" key="1">
    <source>
        <dbReference type="HAMAP-Rule" id="MF_03140"/>
    </source>
</evidence>
<evidence type="ECO:0000256" key="2">
    <source>
        <dbReference type="SAM" id="MobiDB-lite"/>
    </source>
</evidence>
<dbReference type="EC" id="3.1.-.-" evidence="1"/>
<dbReference type="EMBL" id="CH479183">
    <property type="protein sequence ID" value="EDW36343.1"/>
    <property type="molecule type" value="Genomic_DNA"/>
</dbReference>
<dbReference type="SMR" id="B4GIM3"/>
<dbReference type="STRING" id="7234.B4GIM3"/>
<dbReference type="EnsemblMetazoa" id="FBtr0182343">
    <property type="protein sequence ID" value="FBpp0180835"/>
    <property type="gene ID" value="FBgn0154332"/>
</dbReference>
<dbReference type="EnsemblMetazoa" id="XM_002018468.2">
    <property type="protein sequence ID" value="XP_002018504.1"/>
    <property type="gene ID" value="LOC6592701"/>
</dbReference>
<dbReference type="GeneID" id="6592701"/>
<dbReference type="KEGG" id="dpe:6592701"/>
<dbReference type="CTD" id="2237"/>
<dbReference type="eggNOG" id="KOG2519">
    <property type="taxonomic scope" value="Eukaryota"/>
</dbReference>
<dbReference type="HOGENOM" id="CLU_032444_2_0_1"/>
<dbReference type="OMA" id="MGIPWVQ"/>
<dbReference type="OrthoDB" id="1937206at2759"/>
<dbReference type="PhylomeDB" id="B4GIM3"/>
<dbReference type="Proteomes" id="UP000008744">
    <property type="component" value="Unassembled WGS sequence"/>
</dbReference>
<dbReference type="GO" id="GO:0005739">
    <property type="term" value="C:mitochondrion"/>
    <property type="evidence" value="ECO:0007669"/>
    <property type="project" value="UniProtKB-SubCell"/>
</dbReference>
<dbReference type="GO" id="GO:0005730">
    <property type="term" value="C:nucleolus"/>
    <property type="evidence" value="ECO:0007669"/>
    <property type="project" value="UniProtKB-SubCell"/>
</dbReference>
<dbReference type="GO" id="GO:0005654">
    <property type="term" value="C:nucleoplasm"/>
    <property type="evidence" value="ECO:0007669"/>
    <property type="project" value="UniProtKB-SubCell"/>
</dbReference>
<dbReference type="GO" id="GO:0008409">
    <property type="term" value="F:5'-3' exonuclease activity"/>
    <property type="evidence" value="ECO:0007669"/>
    <property type="project" value="UniProtKB-UniRule"/>
</dbReference>
<dbReference type="GO" id="GO:0017108">
    <property type="term" value="F:5'-flap endonuclease activity"/>
    <property type="evidence" value="ECO:0007669"/>
    <property type="project" value="UniProtKB-UniRule"/>
</dbReference>
<dbReference type="GO" id="GO:0003677">
    <property type="term" value="F:DNA binding"/>
    <property type="evidence" value="ECO:0007669"/>
    <property type="project" value="UniProtKB-UniRule"/>
</dbReference>
<dbReference type="GO" id="GO:0000287">
    <property type="term" value="F:magnesium ion binding"/>
    <property type="evidence" value="ECO:0007669"/>
    <property type="project" value="UniProtKB-UniRule"/>
</dbReference>
<dbReference type="GO" id="GO:0030145">
    <property type="term" value="F:manganese ion binding"/>
    <property type="evidence" value="ECO:0007669"/>
    <property type="project" value="TreeGrafter"/>
</dbReference>
<dbReference type="GO" id="GO:0004523">
    <property type="term" value="F:RNA-DNA hybrid ribonuclease activity"/>
    <property type="evidence" value="ECO:0007669"/>
    <property type="project" value="TreeGrafter"/>
</dbReference>
<dbReference type="GO" id="GO:0006284">
    <property type="term" value="P:base-excision repair"/>
    <property type="evidence" value="ECO:0007669"/>
    <property type="project" value="UniProtKB-UniRule"/>
</dbReference>
<dbReference type="GO" id="GO:0043137">
    <property type="term" value="P:DNA replication, removal of RNA primer"/>
    <property type="evidence" value="ECO:0007669"/>
    <property type="project" value="UniProtKB-UniRule"/>
</dbReference>
<dbReference type="CDD" id="cd09867">
    <property type="entry name" value="PIN_FEN1"/>
    <property type="match status" value="1"/>
</dbReference>
<dbReference type="FunFam" id="1.10.150.20:FF:000009">
    <property type="entry name" value="Flap endonuclease 1"/>
    <property type="match status" value="1"/>
</dbReference>
<dbReference type="FunFam" id="3.40.50.1010:FF:000003">
    <property type="entry name" value="Flap endonuclease 1"/>
    <property type="match status" value="1"/>
</dbReference>
<dbReference type="Gene3D" id="1.10.150.20">
    <property type="entry name" value="5' to 3' exonuclease, C-terminal subdomain"/>
    <property type="match status" value="1"/>
</dbReference>
<dbReference type="Gene3D" id="3.40.50.1010">
    <property type="entry name" value="5'-nuclease"/>
    <property type="match status" value="1"/>
</dbReference>
<dbReference type="HAMAP" id="MF_00614">
    <property type="entry name" value="Fen"/>
    <property type="match status" value="1"/>
</dbReference>
<dbReference type="InterPro" id="IPR036279">
    <property type="entry name" value="5-3_exonuclease_C_sf"/>
</dbReference>
<dbReference type="InterPro" id="IPR023426">
    <property type="entry name" value="Flap_endonuc"/>
</dbReference>
<dbReference type="InterPro" id="IPR008918">
    <property type="entry name" value="HhH2"/>
</dbReference>
<dbReference type="InterPro" id="IPR029060">
    <property type="entry name" value="PIN-like_dom_sf"/>
</dbReference>
<dbReference type="InterPro" id="IPR006086">
    <property type="entry name" value="XPG-I_dom"/>
</dbReference>
<dbReference type="InterPro" id="IPR006084">
    <property type="entry name" value="XPG/Rad2"/>
</dbReference>
<dbReference type="InterPro" id="IPR019974">
    <property type="entry name" value="XPG_CS"/>
</dbReference>
<dbReference type="InterPro" id="IPR006085">
    <property type="entry name" value="XPG_DNA_repair_N"/>
</dbReference>
<dbReference type="PANTHER" id="PTHR11081:SF9">
    <property type="entry name" value="FLAP ENDONUCLEASE 1"/>
    <property type="match status" value="1"/>
</dbReference>
<dbReference type="PANTHER" id="PTHR11081">
    <property type="entry name" value="FLAP ENDONUCLEASE FAMILY MEMBER"/>
    <property type="match status" value="1"/>
</dbReference>
<dbReference type="Pfam" id="PF00867">
    <property type="entry name" value="XPG_I"/>
    <property type="match status" value="1"/>
</dbReference>
<dbReference type="Pfam" id="PF00752">
    <property type="entry name" value="XPG_N"/>
    <property type="match status" value="1"/>
</dbReference>
<dbReference type="PRINTS" id="PR00853">
    <property type="entry name" value="XPGRADSUPER"/>
</dbReference>
<dbReference type="SMART" id="SM00279">
    <property type="entry name" value="HhH2"/>
    <property type="match status" value="1"/>
</dbReference>
<dbReference type="SMART" id="SM00484">
    <property type="entry name" value="XPGI"/>
    <property type="match status" value="1"/>
</dbReference>
<dbReference type="SMART" id="SM00485">
    <property type="entry name" value="XPGN"/>
    <property type="match status" value="1"/>
</dbReference>
<dbReference type="SUPFAM" id="SSF47807">
    <property type="entry name" value="5' to 3' exonuclease, C-terminal subdomain"/>
    <property type="match status" value="1"/>
</dbReference>
<dbReference type="SUPFAM" id="SSF88723">
    <property type="entry name" value="PIN domain-like"/>
    <property type="match status" value="1"/>
</dbReference>
<dbReference type="PROSITE" id="PS00841">
    <property type="entry name" value="XPG_1"/>
    <property type="match status" value="1"/>
</dbReference>
<dbReference type="PROSITE" id="PS00842">
    <property type="entry name" value="XPG_2"/>
    <property type="match status" value="1"/>
</dbReference>
<comment type="function">
    <text evidence="1">Structure-specific nuclease with 5'-flap endonuclease and 5'-3' exonuclease activities involved in DNA replication and repair. During DNA replication, cleaves the 5'-overhanging flap structure that is generated by displacement synthesis when DNA polymerase encounters the 5'-end of a downstream Okazaki fragment. It enters the flap from the 5'-end and then tracks to cleave the flap base, leaving a nick for ligation. Also involved in the long patch base excision repair (LP-BER) pathway, by cleaving within the apurinic/apyrimidinic (AP) site-terminated flap. Acts as a genome stabilization factor that prevents flaps from equilibrating into structures that lead to duplications and deletions. Also possesses 5'-3' exonuclease activity on nicked or gapped double-stranded DNA, and exhibits RNase H activity. Also involved in replication and repair of rDNA and in repairing mitochondrial DNA.</text>
</comment>
<comment type="cofactor">
    <cofactor evidence="1">
        <name>Mg(2+)</name>
        <dbReference type="ChEBI" id="CHEBI:18420"/>
    </cofactor>
    <text evidence="1">Binds 2 magnesium ions per subunit. They probably participate in the reaction catalyzed by the enzyme. May bind an additional third magnesium ion after substrate binding.</text>
</comment>
<comment type="subunit">
    <text evidence="1">Interacts with PCNA. Three molecules of FEN1 bind to one PCNA trimer with each molecule binding to one PCNA monomer. PCNA stimulates the nuclease activity without altering cleavage specificity.</text>
</comment>
<comment type="subcellular location">
    <subcellularLocation>
        <location evidence="1">Nucleus</location>
        <location evidence="1">Nucleolus</location>
    </subcellularLocation>
    <subcellularLocation>
        <location evidence="1">Nucleus</location>
        <location evidence="1">Nucleoplasm</location>
    </subcellularLocation>
    <subcellularLocation>
        <location evidence="1">Mitochondrion</location>
    </subcellularLocation>
    <text evidence="1">Resides mostly in the nucleoli and relocalizes to the nucleoplasm upon DNA damage.</text>
</comment>
<comment type="PTM">
    <text evidence="1">Phosphorylated. Phosphorylation upon DNA damage induces relocalization to the nuclear plasma.</text>
</comment>
<comment type="similarity">
    <text evidence="1">Belongs to the XPG/RAD2 endonuclease family. FEN1 subfamily.</text>
</comment>
<reference key="1">
    <citation type="journal article" date="2007" name="Nature">
        <title>Evolution of genes and genomes on the Drosophila phylogeny.</title>
        <authorList>
            <consortium name="Drosophila 12 genomes consortium"/>
        </authorList>
    </citation>
    <scope>NUCLEOTIDE SEQUENCE [LARGE SCALE GENOMIC DNA]</scope>
    <source>
        <strain>MSH-3 / Tucson 14011-0111.49</strain>
    </source>
</reference>
<protein>
    <recommendedName>
        <fullName evidence="1">Flap endonuclease 1</fullName>
        <shortName evidence="1">FEN-1</shortName>
        <ecNumber evidence="1">3.1.-.-</ecNumber>
    </recommendedName>
    <alternativeName>
        <fullName evidence="1">Flap structure-specific endonuclease 1</fullName>
    </alternativeName>
</protein>
<sequence>MGILGLSKLIADLAPQAIRESEMKHFFGRKVAIDASMCLYQFLIAVRSEGAQLATVNGDPTSHLMGMFYRTIRLLDNGIKPVYVFDGKPPDLKSGELAKRAERREEAEKALKAATDAGDDAEIEKFNRRLVRVTKEHAREAKELLSLMGVPYVDAPCEAEAQCAALVKAGKVYATATEDMDALTFGSTKLLRYLTYSEARKMPVKEFSYDKLLEGLEVNNREFIDLCILLGCDYCESIKGIGPKRAIELINNYRDIETILDNLDTSKYTVPENWNYKVARELFIEPEVADASAIDLKWTEPDEEGLVKFLCGDRQFSEERVRNGAKKLLKSKHAQTQVRLDSFFKTLPSTPNAVHAAKRKAEEAKKSANNKKAKTSGGAARGRRPK</sequence>
<gene>
    <name evidence="1" type="primary">Fen1</name>
    <name type="ORF">GL16728</name>
</gene>
<organism>
    <name type="scientific">Drosophila persimilis</name>
    <name type="common">Fruit fly</name>
    <dbReference type="NCBI Taxonomy" id="7234"/>
    <lineage>
        <taxon>Eukaryota</taxon>
        <taxon>Metazoa</taxon>
        <taxon>Ecdysozoa</taxon>
        <taxon>Arthropoda</taxon>
        <taxon>Hexapoda</taxon>
        <taxon>Insecta</taxon>
        <taxon>Pterygota</taxon>
        <taxon>Neoptera</taxon>
        <taxon>Endopterygota</taxon>
        <taxon>Diptera</taxon>
        <taxon>Brachycera</taxon>
        <taxon>Muscomorpha</taxon>
        <taxon>Ephydroidea</taxon>
        <taxon>Drosophilidae</taxon>
        <taxon>Drosophila</taxon>
        <taxon>Sophophora</taxon>
    </lineage>
</organism>